<gene>
    <name evidence="1" type="primary">glmM</name>
    <name type="ordered locus">SFV_3206</name>
</gene>
<name>GLMM_SHIF8</name>
<comment type="function">
    <text evidence="1">Catalyzes the conversion of glucosamine-6-phosphate to glucosamine-1-phosphate.</text>
</comment>
<comment type="catalytic activity">
    <reaction evidence="1">
        <text>alpha-D-glucosamine 1-phosphate = D-glucosamine 6-phosphate</text>
        <dbReference type="Rhea" id="RHEA:23424"/>
        <dbReference type="ChEBI" id="CHEBI:58516"/>
        <dbReference type="ChEBI" id="CHEBI:58725"/>
        <dbReference type="EC" id="5.4.2.10"/>
    </reaction>
</comment>
<comment type="cofactor">
    <cofactor evidence="1">
        <name>Mg(2+)</name>
        <dbReference type="ChEBI" id="CHEBI:18420"/>
    </cofactor>
    <text evidence="1">Binds 1 Mg(2+) ion per subunit.</text>
</comment>
<comment type="PTM">
    <text evidence="1">Activated by phosphorylation.</text>
</comment>
<comment type="similarity">
    <text evidence="1">Belongs to the phosphohexose mutase family.</text>
</comment>
<organism>
    <name type="scientific">Shigella flexneri serotype 5b (strain 8401)</name>
    <dbReference type="NCBI Taxonomy" id="373384"/>
    <lineage>
        <taxon>Bacteria</taxon>
        <taxon>Pseudomonadati</taxon>
        <taxon>Pseudomonadota</taxon>
        <taxon>Gammaproteobacteria</taxon>
        <taxon>Enterobacterales</taxon>
        <taxon>Enterobacteriaceae</taxon>
        <taxon>Shigella</taxon>
    </lineage>
</organism>
<feature type="chain" id="PRO_0000301381" description="Phosphoglucosamine mutase">
    <location>
        <begin position="1"/>
        <end position="445"/>
    </location>
</feature>
<feature type="active site" description="Phosphoserine intermediate" evidence="1">
    <location>
        <position position="102"/>
    </location>
</feature>
<feature type="binding site" description="via phosphate group" evidence="1">
    <location>
        <position position="102"/>
    </location>
    <ligand>
        <name>Mg(2+)</name>
        <dbReference type="ChEBI" id="CHEBI:18420"/>
    </ligand>
</feature>
<feature type="binding site" evidence="1">
    <location>
        <position position="241"/>
    </location>
    <ligand>
        <name>Mg(2+)</name>
        <dbReference type="ChEBI" id="CHEBI:18420"/>
    </ligand>
</feature>
<feature type="binding site" evidence="1">
    <location>
        <position position="243"/>
    </location>
    <ligand>
        <name>Mg(2+)</name>
        <dbReference type="ChEBI" id="CHEBI:18420"/>
    </ligand>
</feature>
<feature type="binding site" evidence="1">
    <location>
        <position position="245"/>
    </location>
    <ligand>
        <name>Mg(2+)</name>
        <dbReference type="ChEBI" id="CHEBI:18420"/>
    </ligand>
</feature>
<feature type="modified residue" description="Phosphoserine" evidence="1">
    <location>
        <position position="102"/>
    </location>
</feature>
<dbReference type="EC" id="5.4.2.10" evidence="1"/>
<dbReference type="EMBL" id="CP000266">
    <property type="protein sequence ID" value="ABF05257.1"/>
    <property type="molecule type" value="Genomic_DNA"/>
</dbReference>
<dbReference type="RefSeq" id="WP_000071149.1">
    <property type="nucleotide sequence ID" value="NC_008258.1"/>
</dbReference>
<dbReference type="SMR" id="Q0T0A8"/>
<dbReference type="KEGG" id="sfv:SFV_3206"/>
<dbReference type="HOGENOM" id="CLU_016950_7_0_6"/>
<dbReference type="Proteomes" id="UP000000659">
    <property type="component" value="Chromosome"/>
</dbReference>
<dbReference type="GO" id="GO:0005829">
    <property type="term" value="C:cytosol"/>
    <property type="evidence" value="ECO:0007669"/>
    <property type="project" value="TreeGrafter"/>
</dbReference>
<dbReference type="GO" id="GO:0000287">
    <property type="term" value="F:magnesium ion binding"/>
    <property type="evidence" value="ECO:0007669"/>
    <property type="project" value="UniProtKB-UniRule"/>
</dbReference>
<dbReference type="GO" id="GO:0008966">
    <property type="term" value="F:phosphoglucosamine mutase activity"/>
    <property type="evidence" value="ECO:0007669"/>
    <property type="project" value="UniProtKB-UniRule"/>
</dbReference>
<dbReference type="GO" id="GO:0004615">
    <property type="term" value="F:phosphomannomutase activity"/>
    <property type="evidence" value="ECO:0007669"/>
    <property type="project" value="TreeGrafter"/>
</dbReference>
<dbReference type="GO" id="GO:0005975">
    <property type="term" value="P:carbohydrate metabolic process"/>
    <property type="evidence" value="ECO:0007669"/>
    <property type="project" value="InterPro"/>
</dbReference>
<dbReference type="GO" id="GO:0009252">
    <property type="term" value="P:peptidoglycan biosynthetic process"/>
    <property type="evidence" value="ECO:0007669"/>
    <property type="project" value="TreeGrafter"/>
</dbReference>
<dbReference type="GO" id="GO:0006048">
    <property type="term" value="P:UDP-N-acetylglucosamine biosynthetic process"/>
    <property type="evidence" value="ECO:0007669"/>
    <property type="project" value="TreeGrafter"/>
</dbReference>
<dbReference type="CDD" id="cd05802">
    <property type="entry name" value="GlmM"/>
    <property type="match status" value="1"/>
</dbReference>
<dbReference type="FunFam" id="3.30.310.50:FF:000001">
    <property type="entry name" value="Phosphoglucosamine mutase"/>
    <property type="match status" value="1"/>
</dbReference>
<dbReference type="FunFam" id="3.40.120.10:FF:000001">
    <property type="entry name" value="Phosphoglucosamine mutase"/>
    <property type="match status" value="1"/>
</dbReference>
<dbReference type="FunFam" id="3.40.120.10:FF:000003">
    <property type="entry name" value="Phosphoglucosamine mutase"/>
    <property type="match status" value="1"/>
</dbReference>
<dbReference type="Gene3D" id="3.40.120.10">
    <property type="entry name" value="Alpha-D-Glucose-1,6-Bisphosphate, subunit A, domain 3"/>
    <property type="match status" value="3"/>
</dbReference>
<dbReference type="Gene3D" id="3.30.310.50">
    <property type="entry name" value="Alpha-D-phosphohexomutase, C-terminal domain"/>
    <property type="match status" value="1"/>
</dbReference>
<dbReference type="HAMAP" id="MF_01554_B">
    <property type="entry name" value="GlmM_B"/>
    <property type="match status" value="1"/>
</dbReference>
<dbReference type="InterPro" id="IPR005844">
    <property type="entry name" value="A-D-PHexomutase_a/b/a-I"/>
</dbReference>
<dbReference type="InterPro" id="IPR016055">
    <property type="entry name" value="A-D-PHexomutase_a/b/a-I/II/III"/>
</dbReference>
<dbReference type="InterPro" id="IPR005845">
    <property type="entry name" value="A-D-PHexomutase_a/b/a-II"/>
</dbReference>
<dbReference type="InterPro" id="IPR005846">
    <property type="entry name" value="A-D-PHexomutase_a/b/a-III"/>
</dbReference>
<dbReference type="InterPro" id="IPR005843">
    <property type="entry name" value="A-D-PHexomutase_C"/>
</dbReference>
<dbReference type="InterPro" id="IPR036900">
    <property type="entry name" value="A-D-PHexomutase_C_sf"/>
</dbReference>
<dbReference type="InterPro" id="IPR016066">
    <property type="entry name" value="A-D-PHexomutase_CS"/>
</dbReference>
<dbReference type="InterPro" id="IPR005841">
    <property type="entry name" value="Alpha-D-phosphohexomutase_SF"/>
</dbReference>
<dbReference type="InterPro" id="IPR006352">
    <property type="entry name" value="GlmM_bact"/>
</dbReference>
<dbReference type="InterPro" id="IPR050060">
    <property type="entry name" value="Phosphoglucosamine_mutase"/>
</dbReference>
<dbReference type="NCBIfam" id="TIGR01455">
    <property type="entry name" value="glmM"/>
    <property type="match status" value="1"/>
</dbReference>
<dbReference type="NCBIfam" id="NF008139">
    <property type="entry name" value="PRK10887.1"/>
    <property type="match status" value="1"/>
</dbReference>
<dbReference type="PANTHER" id="PTHR42946:SF1">
    <property type="entry name" value="PHOSPHOGLUCOMUTASE (ALPHA-D-GLUCOSE-1,6-BISPHOSPHATE-DEPENDENT)"/>
    <property type="match status" value="1"/>
</dbReference>
<dbReference type="PANTHER" id="PTHR42946">
    <property type="entry name" value="PHOSPHOHEXOSE MUTASE"/>
    <property type="match status" value="1"/>
</dbReference>
<dbReference type="Pfam" id="PF02878">
    <property type="entry name" value="PGM_PMM_I"/>
    <property type="match status" value="1"/>
</dbReference>
<dbReference type="Pfam" id="PF02879">
    <property type="entry name" value="PGM_PMM_II"/>
    <property type="match status" value="1"/>
</dbReference>
<dbReference type="Pfam" id="PF02880">
    <property type="entry name" value="PGM_PMM_III"/>
    <property type="match status" value="1"/>
</dbReference>
<dbReference type="Pfam" id="PF00408">
    <property type="entry name" value="PGM_PMM_IV"/>
    <property type="match status" value="1"/>
</dbReference>
<dbReference type="PRINTS" id="PR00509">
    <property type="entry name" value="PGMPMM"/>
</dbReference>
<dbReference type="SUPFAM" id="SSF55957">
    <property type="entry name" value="Phosphoglucomutase, C-terminal domain"/>
    <property type="match status" value="1"/>
</dbReference>
<dbReference type="SUPFAM" id="SSF53738">
    <property type="entry name" value="Phosphoglucomutase, first 3 domains"/>
    <property type="match status" value="3"/>
</dbReference>
<dbReference type="PROSITE" id="PS00710">
    <property type="entry name" value="PGM_PMM"/>
    <property type="match status" value="1"/>
</dbReference>
<evidence type="ECO:0000255" key="1">
    <source>
        <dbReference type="HAMAP-Rule" id="MF_01554"/>
    </source>
</evidence>
<reference key="1">
    <citation type="journal article" date="2006" name="BMC Genomics">
        <title>Complete genome sequence of Shigella flexneri 5b and comparison with Shigella flexneri 2a.</title>
        <authorList>
            <person name="Nie H."/>
            <person name="Yang F."/>
            <person name="Zhang X."/>
            <person name="Yang J."/>
            <person name="Chen L."/>
            <person name="Wang J."/>
            <person name="Xiong Z."/>
            <person name="Peng J."/>
            <person name="Sun L."/>
            <person name="Dong J."/>
            <person name="Xue Y."/>
            <person name="Xu X."/>
            <person name="Chen S."/>
            <person name="Yao Z."/>
            <person name="Shen Y."/>
            <person name="Jin Q."/>
        </authorList>
    </citation>
    <scope>NUCLEOTIDE SEQUENCE [LARGE SCALE GENOMIC DNA]</scope>
    <source>
        <strain>8401</strain>
    </source>
</reference>
<keyword id="KW-0413">Isomerase</keyword>
<keyword id="KW-0460">Magnesium</keyword>
<keyword id="KW-0479">Metal-binding</keyword>
<keyword id="KW-0597">Phosphoprotein</keyword>
<proteinExistence type="inferred from homology"/>
<sequence>MSNRKYFGTDGIRGRVGDAPITPDFVLKLGWAAGKVLARHGSRKIIIGKDTRISGYMLESALEAGLAAAGLSALFTGPMPTPAVAYLTRTFRAEAGIVISASHNPFYDNGIKFFSIDGTKLPDAVEEAIEAEMEKEISCVDSAELGKASRIVDAAGRYIEFCKATFPNELSLSELKIVVDCANGATYHIAPNVLRELGANVIAIGCEPNGVNINAEVGATDVRALQARVLAEKADLGIAFDGDGDRVIMVDHEGNKVDGDQSMYIIAREGLRQGQLRGGAVGTLMSNMGLELALKQLGIPFARAKVGDRYVLEKMQEKGWRIGAENSGHVILLDKTTTGDGIVAGLQVLAAMARNHMSLHDLCSGMKMFPQILVNVRYTAGSGDPLEHESVKAVTAEVEAALGNRGRVLLRKSGTEPLIRVMVEGEDEAQVTEFAHRIADAVKAV</sequence>
<protein>
    <recommendedName>
        <fullName evidence="1">Phosphoglucosamine mutase</fullName>
        <ecNumber evidence="1">5.4.2.10</ecNumber>
    </recommendedName>
</protein>
<accession>Q0T0A8</accession>